<evidence type="ECO:0000255" key="1">
    <source>
        <dbReference type="HAMAP-Rule" id="MF_01302"/>
    </source>
</evidence>
<evidence type="ECO:0000305" key="2"/>
<gene>
    <name evidence="1" type="primary">rpsH</name>
    <name evidence="1" type="synonym">rps8</name>
    <name type="ordered locus">Syncc9605_0363</name>
</gene>
<dbReference type="EMBL" id="CP000110">
    <property type="protein sequence ID" value="ABB34139.1"/>
    <property type="molecule type" value="Genomic_DNA"/>
</dbReference>
<dbReference type="RefSeq" id="WP_011363382.1">
    <property type="nucleotide sequence ID" value="NC_007516.1"/>
</dbReference>
<dbReference type="SMR" id="Q3AMP3"/>
<dbReference type="STRING" id="110662.Syncc9605_0363"/>
<dbReference type="KEGG" id="syd:Syncc9605_0363"/>
<dbReference type="eggNOG" id="COG0096">
    <property type="taxonomic scope" value="Bacteria"/>
</dbReference>
<dbReference type="HOGENOM" id="CLU_098428_0_2_3"/>
<dbReference type="OrthoDB" id="9802617at2"/>
<dbReference type="GO" id="GO:1990904">
    <property type="term" value="C:ribonucleoprotein complex"/>
    <property type="evidence" value="ECO:0007669"/>
    <property type="project" value="UniProtKB-KW"/>
</dbReference>
<dbReference type="GO" id="GO:0005840">
    <property type="term" value="C:ribosome"/>
    <property type="evidence" value="ECO:0007669"/>
    <property type="project" value="UniProtKB-KW"/>
</dbReference>
<dbReference type="GO" id="GO:0019843">
    <property type="term" value="F:rRNA binding"/>
    <property type="evidence" value="ECO:0007669"/>
    <property type="project" value="UniProtKB-UniRule"/>
</dbReference>
<dbReference type="GO" id="GO:0003735">
    <property type="term" value="F:structural constituent of ribosome"/>
    <property type="evidence" value="ECO:0007669"/>
    <property type="project" value="InterPro"/>
</dbReference>
<dbReference type="GO" id="GO:0006412">
    <property type="term" value="P:translation"/>
    <property type="evidence" value="ECO:0007669"/>
    <property type="project" value="UniProtKB-UniRule"/>
</dbReference>
<dbReference type="FunFam" id="3.30.1370.30:FF:000002">
    <property type="entry name" value="30S ribosomal protein S8"/>
    <property type="match status" value="1"/>
</dbReference>
<dbReference type="FunFam" id="3.30.1490.10:FF:000001">
    <property type="entry name" value="30S ribosomal protein S8"/>
    <property type="match status" value="1"/>
</dbReference>
<dbReference type="Gene3D" id="3.30.1370.30">
    <property type="match status" value="1"/>
</dbReference>
<dbReference type="Gene3D" id="3.30.1490.10">
    <property type="match status" value="1"/>
</dbReference>
<dbReference type="HAMAP" id="MF_01302_B">
    <property type="entry name" value="Ribosomal_uS8_B"/>
    <property type="match status" value="1"/>
</dbReference>
<dbReference type="InterPro" id="IPR000630">
    <property type="entry name" value="Ribosomal_uS8"/>
</dbReference>
<dbReference type="InterPro" id="IPR047863">
    <property type="entry name" value="Ribosomal_uS8_CS"/>
</dbReference>
<dbReference type="InterPro" id="IPR035987">
    <property type="entry name" value="Ribosomal_uS8_sf"/>
</dbReference>
<dbReference type="NCBIfam" id="NF001109">
    <property type="entry name" value="PRK00136.1"/>
    <property type="match status" value="1"/>
</dbReference>
<dbReference type="PANTHER" id="PTHR11758">
    <property type="entry name" value="40S RIBOSOMAL PROTEIN S15A"/>
    <property type="match status" value="1"/>
</dbReference>
<dbReference type="Pfam" id="PF00410">
    <property type="entry name" value="Ribosomal_S8"/>
    <property type="match status" value="1"/>
</dbReference>
<dbReference type="SUPFAM" id="SSF56047">
    <property type="entry name" value="Ribosomal protein S8"/>
    <property type="match status" value="1"/>
</dbReference>
<dbReference type="PROSITE" id="PS00053">
    <property type="entry name" value="RIBOSOMAL_S8"/>
    <property type="match status" value="1"/>
</dbReference>
<comment type="function">
    <text evidence="1">One of the primary rRNA binding proteins, it binds directly to 16S rRNA central domain where it helps coordinate assembly of the platform of the 30S subunit.</text>
</comment>
<comment type="subunit">
    <text evidence="1">Part of the 30S ribosomal subunit. Contacts proteins S5 and S12.</text>
</comment>
<comment type="similarity">
    <text evidence="1">Belongs to the universal ribosomal protein uS8 family.</text>
</comment>
<accession>Q3AMP3</accession>
<protein>
    <recommendedName>
        <fullName evidence="1">Small ribosomal subunit protein uS8</fullName>
    </recommendedName>
    <alternativeName>
        <fullName evidence="2">30S ribosomal protein S8</fullName>
    </alternativeName>
</protein>
<sequence>MANHDPISDMLTRIRNASEKRHETTKIPASRMTRSIAKVLQQEGFISEISEQGEGIRTELVLALKYSGKHRLPTIRSMQRVSKPGLRIYKNTRGLPKVLGGLGVAIISTSKGVMSDRDARREGVGGEVLCYVY</sequence>
<name>RS8_SYNSC</name>
<feature type="chain" id="PRO_0000290949" description="Small ribosomal subunit protein uS8">
    <location>
        <begin position="1"/>
        <end position="133"/>
    </location>
</feature>
<reference key="1">
    <citation type="submission" date="2005-07" db="EMBL/GenBank/DDBJ databases">
        <title>Complete sequence of Synechococcus sp. CC9605.</title>
        <authorList>
            <consortium name="US DOE Joint Genome Institute"/>
            <person name="Copeland A."/>
            <person name="Lucas S."/>
            <person name="Lapidus A."/>
            <person name="Barry K."/>
            <person name="Detter J.C."/>
            <person name="Glavina T."/>
            <person name="Hammon N."/>
            <person name="Israni S."/>
            <person name="Pitluck S."/>
            <person name="Schmutz J."/>
            <person name="Martinez M."/>
            <person name="Larimer F."/>
            <person name="Land M."/>
            <person name="Kyrpides N."/>
            <person name="Ivanova N."/>
            <person name="Richardson P."/>
        </authorList>
    </citation>
    <scope>NUCLEOTIDE SEQUENCE [LARGE SCALE GENOMIC DNA]</scope>
    <source>
        <strain>CC9605</strain>
    </source>
</reference>
<organism>
    <name type="scientific">Synechococcus sp. (strain CC9605)</name>
    <dbReference type="NCBI Taxonomy" id="110662"/>
    <lineage>
        <taxon>Bacteria</taxon>
        <taxon>Bacillati</taxon>
        <taxon>Cyanobacteriota</taxon>
        <taxon>Cyanophyceae</taxon>
        <taxon>Synechococcales</taxon>
        <taxon>Synechococcaceae</taxon>
        <taxon>Synechococcus</taxon>
    </lineage>
</organism>
<proteinExistence type="inferred from homology"/>
<keyword id="KW-0687">Ribonucleoprotein</keyword>
<keyword id="KW-0689">Ribosomal protein</keyword>
<keyword id="KW-0694">RNA-binding</keyword>
<keyword id="KW-0699">rRNA-binding</keyword>